<gene>
    <name evidence="2" type="primary">rpsL</name>
    <name type="ordered locus">SSPA3093</name>
</gene>
<dbReference type="EMBL" id="FM200053">
    <property type="protein sequence ID" value="CAR61344.1"/>
    <property type="molecule type" value="Genomic_DNA"/>
</dbReference>
<dbReference type="RefSeq" id="WP_000246815.1">
    <property type="nucleotide sequence ID" value="NC_011147.1"/>
</dbReference>
<dbReference type="SMR" id="B5BGZ4"/>
<dbReference type="GeneID" id="98390450"/>
<dbReference type="KEGG" id="sek:SSPA3093"/>
<dbReference type="HOGENOM" id="CLU_104295_1_2_6"/>
<dbReference type="Proteomes" id="UP000001869">
    <property type="component" value="Chromosome"/>
</dbReference>
<dbReference type="GO" id="GO:0015935">
    <property type="term" value="C:small ribosomal subunit"/>
    <property type="evidence" value="ECO:0007669"/>
    <property type="project" value="InterPro"/>
</dbReference>
<dbReference type="GO" id="GO:0019843">
    <property type="term" value="F:rRNA binding"/>
    <property type="evidence" value="ECO:0007669"/>
    <property type="project" value="UniProtKB-UniRule"/>
</dbReference>
<dbReference type="GO" id="GO:0003735">
    <property type="term" value="F:structural constituent of ribosome"/>
    <property type="evidence" value="ECO:0007669"/>
    <property type="project" value="InterPro"/>
</dbReference>
<dbReference type="GO" id="GO:0000049">
    <property type="term" value="F:tRNA binding"/>
    <property type="evidence" value="ECO:0007669"/>
    <property type="project" value="UniProtKB-UniRule"/>
</dbReference>
<dbReference type="GO" id="GO:0006412">
    <property type="term" value="P:translation"/>
    <property type="evidence" value="ECO:0007669"/>
    <property type="project" value="UniProtKB-UniRule"/>
</dbReference>
<dbReference type="CDD" id="cd03368">
    <property type="entry name" value="Ribosomal_S12"/>
    <property type="match status" value="1"/>
</dbReference>
<dbReference type="FunFam" id="2.40.50.140:FF:000001">
    <property type="entry name" value="30S ribosomal protein S12"/>
    <property type="match status" value="1"/>
</dbReference>
<dbReference type="Gene3D" id="2.40.50.140">
    <property type="entry name" value="Nucleic acid-binding proteins"/>
    <property type="match status" value="1"/>
</dbReference>
<dbReference type="HAMAP" id="MF_00403_B">
    <property type="entry name" value="Ribosomal_uS12_B"/>
    <property type="match status" value="1"/>
</dbReference>
<dbReference type="InterPro" id="IPR012340">
    <property type="entry name" value="NA-bd_OB-fold"/>
</dbReference>
<dbReference type="InterPro" id="IPR006032">
    <property type="entry name" value="Ribosomal_uS12"/>
</dbReference>
<dbReference type="InterPro" id="IPR005679">
    <property type="entry name" value="Ribosomal_uS12_bac"/>
</dbReference>
<dbReference type="NCBIfam" id="TIGR00981">
    <property type="entry name" value="rpsL_bact"/>
    <property type="match status" value="1"/>
</dbReference>
<dbReference type="PANTHER" id="PTHR11652">
    <property type="entry name" value="30S RIBOSOMAL PROTEIN S12 FAMILY MEMBER"/>
    <property type="match status" value="1"/>
</dbReference>
<dbReference type="Pfam" id="PF00164">
    <property type="entry name" value="Ribosom_S12_S23"/>
    <property type="match status" value="1"/>
</dbReference>
<dbReference type="PIRSF" id="PIRSF002133">
    <property type="entry name" value="Ribosomal_S12/S23"/>
    <property type="match status" value="1"/>
</dbReference>
<dbReference type="PRINTS" id="PR01034">
    <property type="entry name" value="RIBOSOMALS12"/>
</dbReference>
<dbReference type="SUPFAM" id="SSF50249">
    <property type="entry name" value="Nucleic acid-binding proteins"/>
    <property type="match status" value="1"/>
</dbReference>
<dbReference type="PROSITE" id="PS00055">
    <property type="entry name" value="RIBOSOMAL_S12"/>
    <property type="match status" value="1"/>
</dbReference>
<comment type="function">
    <text evidence="2">With S4 and S5 plays an important role in translational accuracy.</text>
</comment>
<comment type="function">
    <text evidence="2">Interacts with and stabilizes bases of the 16S rRNA that are involved in tRNA selection in the A site and with the mRNA backbone. Located at the interface of the 30S and 50S subunits, it traverses the body of the 30S subunit contacting proteins on the other side and probably holding the rRNA structure together. The combined cluster of proteins S8, S12 and S17 appears to hold together the shoulder and platform of the 30S subunit.</text>
</comment>
<comment type="subunit">
    <text evidence="2">Part of the 30S ribosomal subunit. Contacts proteins S8 and S17. May interact with IF1 in the 30S initiation complex.</text>
</comment>
<comment type="similarity">
    <text evidence="2">Belongs to the universal ribosomal protein uS12 family.</text>
</comment>
<protein>
    <recommendedName>
        <fullName evidence="2">Small ribosomal subunit protein uS12</fullName>
    </recommendedName>
    <alternativeName>
        <fullName evidence="3">30S ribosomal protein S12</fullName>
    </alternativeName>
</protein>
<accession>B5BGZ4</accession>
<name>RS12_SALPK</name>
<proteinExistence type="inferred from homology"/>
<reference key="1">
    <citation type="journal article" date="2009" name="BMC Genomics">
        <title>Pseudogene accumulation in the evolutionary histories of Salmonella enterica serovars Paratyphi A and Typhi.</title>
        <authorList>
            <person name="Holt K.E."/>
            <person name="Thomson N.R."/>
            <person name="Wain J."/>
            <person name="Langridge G.C."/>
            <person name="Hasan R."/>
            <person name="Bhutta Z.A."/>
            <person name="Quail M.A."/>
            <person name="Norbertczak H."/>
            <person name="Walker D."/>
            <person name="Simmonds M."/>
            <person name="White B."/>
            <person name="Bason N."/>
            <person name="Mungall K."/>
            <person name="Dougan G."/>
            <person name="Parkhill J."/>
        </authorList>
    </citation>
    <scope>NUCLEOTIDE SEQUENCE [LARGE SCALE GENOMIC DNA]</scope>
    <source>
        <strain>AKU_12601</strain>
    </source>
</reference>
<feature type="chain" id="PRO_1000123515" description="Small ribosomal subunit protein uS12">
    <location>
        <begin position="1"/>
        <end position="124"/>
    </location>
</feature>
<feature type="modified residue" description="3-methylthioaspartic acid" evidence="1">
    <location>
        <position position="89"/>
    </location>
</feature>
<keyword id="KW-0488">Methylation</keyword>
<keyword id="KW-0687">Ribonucleoprotein</keyword>
<keyword id="KW-0689">Ribosomal protein</keyword>
<keyword id="KW-0694">RNA-binding</keyword>
<keyword id="KW-0699">rRNA-binding</keyword>
<keyword id="KW-0820">tRNA-binding</keyword>
<evidence type="ECO:0000250" key="1"/>
<evidence type="ECO:0000255" key="2">
    <source>
        <dbReference type="HAMAP-Rule" id="MF_00403"/>
    </source>
</evidence>
<evidence type="ECO:0000305" key="3"/>
<sequence>MATVNQLVRKPRARKVAKSNVPALEACPQKRGVCTRVYTTTPKKPNSALRKVCRVRLTNGFEVTSYIGGEGHNLQEHSVILIRGGRVKDLPGVRYHTVRGALDCSGVKDRKQARSKYGVKRPKA</sequence>
<organism>
    <name type="scientific">Salmonella paratyphi A (strain AKU_12601)</name>
    <dbReference type="NCBI Taxonomy" id="554290"/>
    <lineage>
        <taxon>Bacteria</taxon>
        <taxon>Pseudomonadati</taxon>
        <taxon>Pseudomonadota</taxon>
        <taxon>Gammaproteobacteria</taxon>
        <taxon>Enterobacterales</taxon>
        <taxon>Enterobacteriaceae</taxon>
        <taxon>Salmonella</taxon>
    </lineage>
</organism>